<proteinExistence type="evidence at protein level"/>
<sequence length="129" mass="14456">MKLFTGLIFCSLVLGVSSQWYSFIGEAVQGAWDMYRAYSDMREANYKNSDKYFHARGNYDAAQRGPGGAWAAKVISDARERSQRVTDLFKYGDSGHGVEDSKADQAANEWGRSGKDPNHFRPSGLPDKY</sequence>
<evidence type="ECO:0000250" key="1">
    <source>
        <dbReference type="UniProtKB" id="P05366"/>
    </source>
</evidence>
<evidence type="ECO:0000250" key="2">
    <source>
        <dbReference type="UniProtKB" id="P0DJI8"/>
    </source>
</evidence>
<evidence type="ECO:0000250" key="3">
    <source>
        <dbReference type="UniProtKB" id="P0DJI9"/>
    </source>
</evidence>
<evidence type="ECO:0000256" key="4">
    <source>
        <dbReference type="SAM" id="MobiDB-lite"/>
    </source>
</evidence>
<evidence type="ECO:0000269" key="5">
    <source>
    </source>
</evidence>
<evidence type="ECO:0000269" key="6">
    <source>
    </source>
</evidence>
<evidence type="ECO:0000303" key="7">
    <source>
    </source>
</evidence>
<evidence type="ECO:0000305" key="8"/>
<name>SAA2_NEOVI</name>
<dbReference type="EMBL" id="M34954">
    <property type="protein sequence ID" value="AAA30969.1"/>
    <property type="molecule type" value="mRNA"/>
</dbReference>
<dbReference type="PIR" id="A03199">
    <property type="entry name" value="YLMNA"/>
</dbReference>
<dbReference type="PIR" id="B36451">
    <property type="entry name" value="B36451"/>
</dbReference>
<dbReference type="SMR" id="P02739"/>
<dbReference type="Proteomes" id="UP000694425">
    <property type="component" value="Unplaced"/>
</dbReference>
<dbReference type="GO" id="GO:0034364">
    <property type="term" value="C:high-density lipoprotein particle"/>
    <property type="evidence" value="ECO:0007669"/>
    <property type="project" value="UniProtKB-KW"/>
</dbReference>
<dbReference type="GO" id="GO:0006953">
    <property type="term" value="P:acute-phase response"/>
    <property type="evidence" value="ECO:0007669"/>
    <property type="project" value="UniProtKB-KW"/>
</dbReference>
<dbReference type="FunFam" id="1.10.132.110:FF:000001">
    <property type="entry name" value="Serum amyloid A protein"/>
    <property type="match status" value="1"/>
</dbReference>
<dbReference type="Gene3D" id="1.10.132.110">
    <property type="entry name" value="Serum amyloid A protein"/>
    <property type="match status" value="1"/>
</dbReference>
<dbReference type="InterPro" id="IPR000096">
    <property type="entry name" value="Serum_amyloid_A"/>
</dbReference>
<dbReference type="InterPro" id="IPR052464">
    <property type="entry name" value="Synovial_Prolif_Regulator"/>
</dbReference>
<dbReference type="PANTHER" id="PTHR23424">
    <property type="entry name" value="SERUM AMYLOID A"/>
    <property type="match status" value="1"/>
</dbReference>
<dbReference type="PANTHER" id="PTHR23424:SF29">
    <property type="entry name" value="SERUM AMYLOID A PROTEIN"/>
    <property type="match status" value="1"/>
</dbReference>
<dbReference type="Pfam" id="PF00277">
    <property type="entry name" value="SAA"/>
    <property type="match status" value="1"/>
</dbReference>
<dbReference type="PIRSF" id="PIRSF002472">
    <property type="entry name" value="Serum_amyloid_A"/>
    <property type="match status" value="1"/>
</dbReference>
<dbReference type="PRINTS" id="PR00306">
    <property type="entry name" value="SERUMAMYLOID"/>
</dbReference>
<dbReference type="SMART" id="SM00197">
    <property type="entry name" value="SAA"/>
    <property type="match status" value="1"/>
</dbReference>
<dbReference type="PROSITE" id="PS00992">
    <property type="entry name" value="SAA"/>
    <property type="match status" value="1"/>
</dbReference>
<reference key="1">
    <citation type="journal article" date="1990" name="J. Biol. Chem.">
        <title>Mink serum amyloid A protein. Expression and primary structure based on cDNA sequences.</title>
        <authorList>
            <person name="Marhaug G."/>
            <person name="Husby G."/>
            <person name="Dowton S.B."/>
        </authorList>
    </citation>
    <scope>NUCLEOTIDE SEQUENCE [MRNA]</scope>
    <scope>TISSUE SPECIFICITY</scope>
    <source>
        <tissue>Liver</tissue>
    </source>
</reference>
<reference key="2">
    <citation type="journal article" date="1980" name="Eur. J. Biochem.">
        <title>The primary structure of amyloid fibril protein AA in endotoxin-induced amyloidosis of the mink.</title>
        <authorList>
            <person name="Waalen K."/>
            <person name="Sletten K."/>
            <person name="Husby G."/>
            <person name="Nordstoga K."/>
        </authorList>
    </citation>
    <scope>PROTEIN SEQUENCE OF 19-82</scope>
    <scope>PROTEIN SEQUENCE OF 19-71</scope>
    <scope>PYROGLUTAMATE FORMATION AT GLN-19</scope>
    <scope>TISSUE SPECIFICITY</scope>
</reference>
<protein>
    <recommendedName>
        <fullName evidence="3">Serum amyloid A-2 protein</fullName>
    </recommendedName>
    <component>
        <recommendedName>
            <fullName evidence="7">Amyloid protein AA1</fullName>
        </recommendedName>
        <alternativeName>
            <fullName evidence="7">Protein AA1</fullName>
            <shortName evidence="7">AA1</shortName>
        </alternativeName>
    </component>
    <component>
        <recommendedName>
            <fullName evidence="7">Amyloid protein AA2</fullName>
        </recommendedName>
        <alternativeName>
            <fullName evidence="7">Protein AA2</fullName>
            <shortName evidence="7">AA2</shortName>
        </alternativeName>
    </component>
</protein>
<comment type="function">
    <text evidence="1">Major acute phase reactant.</text>
</comment>
<comment type="subunit">
    <text evidence="2">Apolipoprotein of the HDL complex.</text>
</comment>
<comment type="subcellular location">
    <subcellularLocation>
        <location evidence="2">Secreted</location>
    </subcellularLocation>
</comment>
<comment type="tissue specificity">
    <text evidence="5 6">Expressed by the liver; secreted in plasma.</text>
</comment>
<comment type="similarity">
    <text evidence="8">Belongs to the SAA family.</text>
</comment>
<feature type="signal peptide" evidence="6">
    <location>
        <begin position="1"/>
        <end position="18"/>
    </location>
</feature>
<feature type="chain" id="PRO_0000031594" description="Serum amyloid A-2 protein">
    <location>
        <begin position="19"/>
        <end position="129"/>
    </location>
</feature>
<feature type="chain" id="PRO_0000031595" description="Amyloid protein AA1" evidence="6">
    <location>
        <begin position="19"/>
        <end position="82"/>
    </location>
</feature>
<feature type="chain" id="PRO_0000450362" description="Amyloid protein AA2" evidence="6">
    <location>
        <begin position="19"/>
        <end position="71"/>
    </location>
</feature>
<feature type="region of interest" description="Disordered" evidence="4">
    <location>
        <begin position="92"/>
        <end position="129"/>
    </location>
</feature>
<feature type="modified residue" description="Pyrrolidone carboxylic acid" evidence="6">
    <location>
        <position position="19"/>
    </location>
</feature>
<feature type="sequence variant">
    <original>I</original>
    <variation>F</variation>
    <location>
        <position position="24"/>
    </location>
</feature>
<organism>
    <name type="scientific">Neovison vison</name>
    <name type="common">American mink</name>
    <name type="synonym">Mustela vison</name>
    <dbReference type="NCBI Taxonomy" id="452646"/>
    <lineage>
        <taxon>Eukaryota</taxon>
        <taxon>Metazoa</taxon>
        <taxon>Chordata</taxon>
        <taxon>Craniata</taxon>
        <taxon>Vertebrata</taxon>
        <taxon>Euteleostomi</taxon>
        <taxon>Mammalia</taxon>
        <taxon>Eutheria</taxon>
        <taxon>Laurasiatheria</taxon>
        <taxon>Carnivora</taxon>
        <taxon>Caniformia</taxon>
        <taxon>Musteloidea</taxon>
        <taxon>Mustelidae</taxon>
        <taxon>Mustelinae</taxon>
        <taxon>Neogale</taxon>
    </lineage>
</organism>
<keyword id="KW-0011">Acute phase</keyword>
<keyword id="KW-0034">Amyloid</keyword>
<keyword id="KW-0903">Direct protein sequencing</keyword>
<keyword id="KW-0345">HDL</keyword>
<keyword id="KW-0873">Pyrrolidone carboxylic acid</keyword>
<keyword id="KW-1185">Reference proteome</keyword>
<keyword id="KW-0964">Secreted</keyword>
<keyword id="KW-0732">Signal</keyword>
<accession>P02739</accession>
<gene>
    <name type="primary">SAA2P0DJI9</name>
</gene>